<organism>
    <name type="scientific">Taro vein chlorosis virus</name>
    <name type="common">TAVCV</name>
    <dbReference type="NCBI Taxonomy" id="2749935"/>
    <lineage>
        <taxon>Viruses</taxon>
        <taxon>Riboviria</taxon>
        <taxon>Orthornavirae</taxon>
        <taxon>Negarnaviricota</taxon>
        <taxon>Haploviricotina</taxon>
        <taxon>Monjiviricetes</taxon>
        <taxon>Mononegavirales</taxon>
        <taxon>Rhabdoviridae</taxon>
        <taxon>Betarhabdovirinae</taxon>
        <taxon>Alphanucleorhabdovirus</taxon>
    </lineage>
</organism>
<keyword id="KW-0167">Capsid protein</keyword>
<keyword id="KW-1139">Helical capsid protein</keyword>
<keyword id="KW-1035">Host cytoplasm</keyword>
<keyword id="KW-1185">Reference proteome</keyword>
<keyword id="KW-0687">Ribonucleoprotein</keyword>
<keyword id="KW-0694">RNA-binding</keyword>
<keyword id="KW-0766">Superantigen</keyword>
<keyword id="KW-0543">Viral nucleoprotein</keyword>
<keyword id="KW-0946">Virion</keyword>
<gene>
    <name type="primary">N</name>
</gene>
<feature type="chain" id="PRO_0000299203" description="Nucleoprotein">
    <location>
        <begin position="1"/>
        <end position="502"/>
    </location>
</feature>
<feature type="region of interest" description="Disordered" evidence="2">
    <location>
        <begin position="415"/>
        <end position="445"/>
    </location>
</feature>
<sequence length="502" mass="55399">MSYINIPDDVVSKYSDDLKTFTQKAGEIPSSKSLIPQTAYTIAALKTKLKFWEVTAKDDPTIASDWAGVCTAITAGTFSATNLKTVCELAFNLRKPHETGNVFIHTVPSDWTSSISTDSVDTTPIPATESDATLSTVSAAVQSGAAEDAATKAKAISFLCCALIRLSVKEPSHIMTAITSIRQRFGSLYGLASATLNAITFTRQQLSRIKQGIETYSLARGTIFYYVRYADTTYGSSDKSYGVCRFLLFQHLELEGMHIYKMILALLTEWSTVPIGLLLTWIRNPKSALAVVEIKNIITNFDKAGVDKSWKYSRMIDNTFFLNISSRRNVYMCALLASLNKRHVPQGVGDYADPRNIAVIKAMDAAVKNQVAIDVTLVERIYEKYLISAGSTDAGTAYTLSRGTKRPNPAVFMSHQQAEGHPTKKRTWKSMVPPPPTLQLEDQQQRRLSPELCEDCFSELLRGKHHRILPPPVIPSSSSEVLFSKSRIMEISGGCSFDPIGF</sequence>
<comment type="function">
    <text evidence="1">Encapsidates the genome, protecting it from nucleases. If expressed without protein P it binds non-specifically RNA and therefore can bind it's own mRNA. Interaction with protein P abolishes any non-specific RNA binding, and prevents phosphorylation. The soluble N-P complex encapsidates specifically the genomic RNA, with protein N protecting the genome like a pearl necklace. The encapsidated genomic RNA is termed the nucleocapsid (NC) and serves as template for viral transcription and replication. Protein N binds protein P in the NC through a different interaction, and can be phosphorylated. Subsequent viral replication is dependent on intracellular concentration of newly synthesized protein N. During replication, encapsidation by protein N is coupled to RNA synthesis and all replicative products are resistant to nucleases (By similarity).</text>
</comment>
<comment type="subunit">
    <text evidence="1">Homomultimerizes to form the nucleocapsid. Binds to viral genomic RNA (By similarity).</text>
</comment>
<comment type="subcellular location">
    <subcellularLocation>
        <location>Virion</location>
    </subcellularLocation>
    <subcellularLocation>
        <location evidence="1">Host cytoplasm</location>
    </subcellularLocation>
</comment>
<comment type="similarity">
    <text evidence="3">Belongs to the nucleorhabdovirus nucleocapsid protein family.</text>
</comment>
<accession>Q5GA90</accession>
<organismHost>
    <name type="scientific">Colocasia esculenta</name>
    <name type="common">Wild taro</name>
    <name type="synonym">Arum esculentum</name>
    <dbReference type="NCBI Taxonomy" id="4460"/>
</organismHost>
<protein>
    <recommendedName>
        <fullName>Nucleoprotein</fullName>
        <shortName>NP</shortName>
    </recommendedName>
    <alternativeName>
        <fullName>Nucleocapsid protein</fullName>
        <shortName>Protein N</shortName>
    </alternativeName>
</protein>
<dbReference type="EMBL" id="AY674964">
    <property type="protein sequence ID" value="AAV92082.1"/>
    <property type="molecule type" value="Genomic_RNA"/>
</dbReference>
<dbReference type="KEGG" id="vg:5076496"/>
<dbReference type="OrthoDB" id="6784at10239"/>
<dbReference type="Proteomes" id="UP000007540">
    <property type="component" value="Segment"/>
</dbReference>
<dbReference type="GO" id="GO:0019029">
    <property type="term" value="C:helical viral capsid"/>
    <property type="evidence" value="ECO:0007669"/>
    <property type="project" value="UniProtKB-KW"/>
</dbReference>
<dbReference type="GO" id="GO:0030430">
    <property type="term" value="C:host cell cytoplasm"/>
    <property type="evidence" value="ECO:0007669"/>
    <property type="project" value="UniProtKB-SubCell"/>
</dbReference>
<dbReference type="GO" id="GO:1990904">
    <property type="term" value="C:ribonucleoprotein complex"/>
    <property type="evidence" value="ECO:0007669"/>
    <property type="project" value="UniProtKB-KW"/>
</dbReference>
<dbReference type="GO" id="GO:0019013">
    <property type="term" value="C:viral nucleocapsid"/>
    <property type="evidence" value="ECO:0007669"/>
    <property type="project" value="UniProtKB-KW"/>
</dbReference>
<dbReference type="GO" id="GO:0003723">
    <property type="term" value="F:RNA binding"/>
    <property type="evidence" value="ECO:0007669"/>
    <property type="project" value="UniProtKB-KW"/>
</dbReference>
<dbReference type="InterPro" id="IPR004902">
    <property type="entry name" value="Rhabdo_ncap_2"/>
</dbReference>
<dbReference type="Pfam" id="PF03216">
    <property type="entry name" value="Rhabdo_ncap_2"/>
    <property type="match status" value="1"/>
</dbReference>
<name>NCAP_TAVCV</name>
<evidence type="ECO:0000250" key="1"/>
<evidence type="ECO:0000256" key="2">
    <source>
        <dbReference type="SAM" id="MobiDB-lite"/>
    </source>
</evidence>
<evidence type="ECO:0000305" key="3"/>
<reference key="1">
    <citation type="journal article" date="2005" name="J. Gen. Virol.">
        <title>Taro vein chlorosis virus: characterization and variability of a new nucleorhabdovirus.</title>
        <authorList>
            <person name="Revill P."/>
            <person name="Trinh X."/>
            <person name="Dale J."/>
            <person name="Harding R."/>
        </authorList>
    </citation>
    <scope>NUCLEOTIDE SEQUENCE [GENOMIC RNA]</scope>
</reference>
<proteinExistence type="inferred from homology"/>